<protein>
    <recommendedName>
        <fullName evidence="1">Bifunctional uridylyltransferase/uridylyl-removing enzyme</fullName>
        <shortName evidence="1">UTase/UR</shortName>
    </recommendedName>
    <alternativeName>
        <fullName evidence="1">Bifunctional [protein-PII] modification enzyme</fullName>
    </alternativeName>
    <alternativeName>
        <fullName evidence="1">Bifunctional nitrogen sensor protein</fullName>
    </alternativeName>
    <domain>
        <recommendedName>
            <fullName evidence="1">[Protein-PII] uridylyltransferase</fullName>
            <shortName evidence="1">PII uridylyltransferase</shortName>
            <shortName evidence="1">UTase</shortName>
            <ecNumber evidence="1">2.7.7.59</ecNumber>
        </recommendedName>
    </domain>
    <domain>
        <recommendedName>
            <fullName evidence="1">[Protein-PII]-UMP uridylyl-removing enzyme</fullName>
            <shortName evidence="1">UR</shortName>
            <ecNumber evidence="1">3.1.4.-</ecNumber>
        </recommendedName>
    </domain>
</protein>
<reference key="1">
    <citation type="journal article" date="2001" name="Nature">
        <title>Complete genome sequence of Salmonella enterica serovar Typhimurium LT2.</title>
        <authorList>
            <person name="McClelland M."/>
            <person name="Sanderson K.E."/>
            <person name="Spieth J."/>
            <person name="Clifton S.W."/>
            <person name="Latreille P."/>
            <person name="Courtney L."/>
            <person name="Porwollik S."/>
            <person name="Ali J."/>
            <person name="Dante M."/>
            <person name="Du F."/>
            <person name="Hou S."/>
            <person name="Layman D."/>
            <person name="Leonard S."/>
            <person name="Nguyen C."/>
            <person name="Scott K."/>
            <person name="Holmes A."/>
            <person name="Grewal N."/>
            <person name="Mulvaney E."/>
            <person name="Ryan E."/>
            <person name="Sun H."/>
            <person name="Florea L."/>
            <person name="Miller W."/>
            <person name="Stoneking T."/>
            <person name="Nhan M."/>
            <person name="Waterston R."/>
            <person name="Wilson R.K."/>
        </authorList>
    </citation>
    <scope>NUCLEOTIDE SEQUENCE [LARGE SCALE GENOMIC DNA]</scope>
    <source>
        <strain>LT2 / SGSC1412 / ATCC 700720</strain>
    </source>
</reference>
<reference key="2">
    <citation type="journal article" date="1990" name="Mol. Gen. Genet.">
        <title>Cloning and nucleotide sequence of the Salmonella typhimurium pepM gene.</title>
        <authorList>
            <person name="Movva N.R."/>
            <person name="Semon D."/>
            <person name="Meyer C."/>
            <person name="Kawashima E."/>
            <person name="Wingfield P."/>
            <person name="Miller J.L."/>
            <person name="Miller C.G."/>
        </authorList>
    </citation>
    <scope>NUCLEOTIDE SEQUENCE [GENOMIC DNA] OF 1-201</scope>
    <source>
        <strain>LT2</strain>
    </source>
</reference>
<reference key="3">
    <citation type="unpublished observations" date="1992-10">
        <authorList>
            <person name="Robison K."/>
        </authorList>
    </citation>
    <scope>IDENTIFICATION OF PROTEIN</scope>
</reference>
<evidence type="ECO:0000255" key="1">
    <source>
        <dbReference type="HAMAP-Rule" id="MF_00277"/>
    </source>
</evidence>
<evidence type="ECO:0000255" key="2">
    <source>
        <dbReference type="PROSITE-ProRule" id="PRU01175"/>
    </source>
</evidence>
<evidence type="ECO:0000256" key="3">
    <source>
        <dbReference type="SAM" id="MobiDB-lite"/>
    </source>
</evidence>
<evidence type="ECO:0000305" key="4"/>
<dbReference type="EC" id="2.7.7.59" evidence="1"/>
<dbReference type="EC" id="3.1.4.-" evidence="1"/>
<dbReference type="EMBL" id="AE006468">
    <property type="protein sequence ID" value="AAL19178.1"/>
    <property type="molecule type" value="Genomic_DNA"/>
</dbReference>
<dbReference type="EMBL" id="X55778">
    <property type="protein sequence ID" value="CAA39299.1"/>
    <property type="status" value="ALT_FRAME"/>
    <property type="molecule type" value="Genomic_DNA"/>
</dbReference>
<dbReference type="PIR" id="S12028">
    <property type="entry name" value="S12028"/>
</dbReference>
<dbReference type="RefSeq" id="NP_459219.1">
    <property type="nucleotide sequence ID" value="NC_003197.2"/>
</dbReference>
<dbReference type="RefSeq" id="WP_001094519.1">
    <property type="nucleotide sequence ID" value="NC_003197.2"/>
</dbReference>
<dbReference type="SMR" id="P23679"/>
<dbReference type="STRING" id="99287.STM0214"/>
<dbReference type="PaxDb" id="99287-STM0214"/>
<dbReference type="GeneID" id="1251732"/>
<dbReference type="KEGG" id="stm:STM0214"/>
<dbReference type="PATRIC" id="fig|99287.12.peg.227"/>
<dbReference type="HOGENOM" id="CLU_012833_0_0_6"/>
<dbReference type="OMA" id="GLMQFDL"/>
<dbReference type="PhylomeDB" id="P23679"/>
<dbReference type="BioCyc" id="SENT99287:STM0214-MONOMER"/>
<dbReference type="Proteomes" id="UP000001014">
    <property type="component" value="Chromosome"/>
</dbReference>
<dbReference type="GO" id="GO:0008773">
    <property type="term" value="F:[protein-PII] uridylyltransferase activity"/>
    <property type="evidence" value="ECO:0000318"/>
    <property type="project" value="GO_Central"/>
</dbReference>
<dbReference type="GO" id="GO:0008081">
    <property type="term" value="F:phosphoric diester hydrolase activity"/>
    <property type="evidence" value="ECO:0007669"/>
    <property type="project" value="UniProtKB-UniRule"/>
</dbReference>
<dbReference type="GO" id="GO:0006808">
    <property type="term" value="P:regulation of nitrogen utilization"/>
    <property type="evidence" value="ECO:0007669"/>
    <property type="project" value="UniProtKB-UniRule"/>
</dbReference>
<dbReference type="CDD" id="cd04899">
    <property type="entry name" value="ACT_ACR-UUR-like_2"/>
    <property type="match status" value="1"/>
</dbReference>
<dbReference type="CDD" id="cd04900">
    <property type="entry name" value="ACT_UUR-like_1"/>
    <property type="match status" value="1"/>
</dbReference>
<dbReference type="CDD" id="cd00077">
    <property type="entry name" value="HDc"/>
    <property type="match status" value="1"/>
</dbReference>
<dbReference type="CDD" id="cd05401">
    <property type="entry name" value="NT_GlnE_GlnD_like"/>
    <property type="match status" value="1"/>
</dbReference>
<dbReference type="FunFam" id="1.10.3210.10:FF:000005">
    <property type="entry name" value="Bifunctional uridylyltransferase/uridylyl-removing enzyme"/>
    <property type="match status" value="1"/>
</dbReference>
<dbReference type="Gene3D" id="1.10.3210.10">
    <property type="entry name" value="Hypothetical protein af1432"/>
    <property type="match status" value="1"/>
</dbReference>
<dbReference type="Gene3D" id="1.20.120.330">
    <property type="entry name" value="Nucleotidyltransferases domain 2"/>
    <property type="match status" value="1"/>
</dbReference>
<dbReference type="HAMAP" id="MF_00277">
    <property type="entry name" value="PII_uridylyl_transf"/>
    <property type="match status" value="1"/>
</dbReference>
<dbReference type="InterPro" id="IPR045865">
    <property type="entry name" value="ACT-like_dom_sf"/>
</dbReference>
<dbReference type="InterPro" id="IPR002912">
    <property type="entry name" value="ACT_dom"/>
</dbReference>
<dbReference type="InterPro" id="IPR003607">
    <property type="entry name" value="HD/PDEase_dom"/>
</dbReference>
<dbReference type="InterPro" id="IPR006674">
    <property type="entry name" value="HD_domain"/>
</dbReference>
<dbReference type="InterPro" id="IPR043519">
    <property type="entry name" value="NT_sf"/>
</dbReference>
<dbReference type="InterPro" id="IPR013546">
    <property type="entry name" value="PII_UdlTrfase/GS_AdlTrfase"/>
</dbReference>
<dbReference type="InterPro" id="IPR002934">
    <property type="entry name" value="Polymerase_NTP_transf_dom"/>
</dbReference>
<dbReference type="InterPro" id="IPR010043">
    <property type="entry name" value="UTase/UR"/>
</dbReference>
<dbReference type="NCBIfam" id="NF002487">
    <property type="entry name" value="PRK01759.1"/>
    <property type="match status" value="1"/>
</dbReference>
<dbReference type="NCBIfam" id="NF003448">
    <property type="entry name" value="PRK05007.1"/>
    <property type="match status" value="1"/>
</dbReference>
<dbReference type="NCBIfam" id="TIGR01693">
    <property type="entry name" value="UTase_glnD"/>
    <property type="match status" value="1"/>
</dbReference>
<dbReference type="PANTHER" id="PTHR47320">
    <property type="entry name" value="BIFUNCTIONAL URIDYLYLTRANSFERASE/URIDYLYL-REMOVING ENZYME"/>
    <property type="match status" value="1"/>
</dbReference>
<dbReference type="PANTHER" id="PTHR47320:SF1">
    <property type="entry name" value="BIFUNCTIONAL URIDYLYLTRANSFERASE_URIDYLYL-REMOVING ENZYME"/>
    <property type="match status" value="1"/>
</dbReference>
<dbReference type="Pfam" id="PF01842">
    <property type="entry name" value="ACT"/>
    <property type="match status" value="2"/>
</dbReference>
<dbReference type="Pfam" id="PF08335">
    <property type="entry name" value="GlnD_UR_UTase"/>
    <property type="match status" value="1"/>
</dbReference>
<dbReference type="Pfam" id="PF01966">
    <property type="entry name" value="HD"/>
    <property type="match status" value="1"/>
</dbReference>
<dbReference type="Pfam" id="PF01909">
    <property type="entry name" value="NTP_transf_2"/>
    <property type="match status" value="1"/>
</dbReference>
<dbReference type="PIRSF" id="PIRSF006288">
    <property type="entry name" value="PII_uridyltransf"/>
    <property type="match status" value="1"/>
</dbReference>
<dbReference type="SMART" id="SM00471">
    <property type="entry name" value="HDc"/>
    <property type="match status" value="1"/>
</dbReference>
<dbReference type="SUPFAM" id="SSF55021">
    <property type="entry name" value="ACT-like"/>
    <property type="match status" value="2"/>
</dbReference>
<dbReference type="SUPFAM" id="SSF109604">
    <property type="entry name" value="HD-domain/PDEase-like"/>
    <property type="match status" value="1"/>
</dbReference>
<dbReference type="SUPFAM" id="SSF81301">
    <property type="entry name" value="Nucleotidyltransferase"/>
    <property type="match status" value="1"/>
</dbReference>
<dbReference type="SUPFAM" id="SSF81593">
    <property type="entry name" value="Nucleotidyltransferase substrate binding subunit/domain"/>
    <property type="match status" value="1"/>
</dbReference>
<dbReference type="PROSITE" id="PS51671">
    <property type="entry name" value="ACT"/>
    <property type="match status" value="2"/>
</dbReference>
<dbReference type="PROSITE" id="PS51831">
    <property type="entry name" value="HD"/>
    <property type="match status" value="1"/>
</dbReference>
<comment type="function">
    <text evidence="1">Modifies, by uridylylation and deuridylylation, the PII regulatory proteins (GlnB and homologs), in response to the nitrogen status of the cell that GlnD senses through the glutamine level. Under low glutamine levels, catalyzes the conversion of the PII proteins and UTP to PII-UMP and PPi, while under higher glutamine levels, GlnD hydrolyzes PII-UMP to PII and UMP (deuridylylation). Thus, controls uridylylation state and activity of the PII proteins, and plays an important role in the regulation of nitrogen assimilation and metabolism.</text>
</comment>
<comment type="catalytic activity">
    <reaction evidence="1">
        <text>[protein-PII]-L-tyrosine + UTP = [protein-PII]-uridylyl-L-tyrosine + diphosphate</text>
        <dbReference type="Rhea" id="RHEA:13673"/>
        <dbReference type="Rhea" id="RHEA-COMP:12147"/>
        <dbReference type="Rhea" id="RHEA-COMP:12148"/>
        <dbReference type="ChEBI" id="CHEBI:33019"/>
        <dbReference type="ChEBI" id="CHEBI:46398"/>
        <dbReference type="ChEBI" id="CHEBI:46858"/>
        <dbReference type="ChEBI" id="CHEBI:90602"/>
        <dbReference type="EC" id="2.7.7.59"/>
    </reaction>
</comment>
<comment type="catalytic activity">
    <reaction evidence="1">
        <text>[protein-PII]-uridylyl-L-tyrosine + H2O = [protein-PII]-L-tyrosine + UMP + H(+)</text>
        <dbReference type="Rhea" id="RHEA:48600"/>
        <dbReference type="Rhea" id="RHEA-COMP:12147"/>
        <dbReference type="Rhea" id="RHEA-COMP:12148"/>
        <dbReference type="ChEBI" id="CHEBI:15377"/>
        <dbReference type="ChEBI" id="CHEBI:15378"/>
        <dbReference type="ChEBI" id="CHEBI:46858"/>
        <dbReference type="ChEBI" id="CHEBI:57865"/>
        <dbReference type="ChEBI" id="CHEBI:90602"/>
    </reaction>
</comment>
<comment type="cofactor">
    <cofactor evidence="1">
        <name>Mg(2+)</name>
        <dbReference type="ChEBI" id="CHEBI:18420"/>
    </cofactor>
</comment>
<comment type="activity regulation">
    <text evidence="1">Uridylyltransferase (UTase) activity is inhibited by glutamine, while glutamine activates uridylyl-removing (UR) activity.</text>
</comment>
<comment type="domain">
    <text evidence="1">Has four distinct domains: an N-terminal nucleotidyltransferase (NT) domain responsible for UTase activity, a central HD domain that encodes UR activity, and two C-terminal ACT domains that seem to have a role in glutamine sensing.</text>
</comment>
<comment type="similarity">
    <text evidence="1">Belongs to the GlnD family.</text>
</comment>
<comment type="sequence caution" evidence="4">
    <conflict type="frameshift">
        <sequence resource="EMBL-CDS" id="CAA39299"/>
    </conflict>
</comment>
<sequence length="890" mass="102264">MNTLPEQHANTALPTLPDQPQNPGVWPRAELTVAGIKARIDIFQHWLGEAFDSGICAEQLIEARTEFIDQLLQRLWIEAGFGQIADLALVAVGGYGRGELHPLSDIDLLILSRKKLPDEQAQKVGELLTLLWDVKLDVGHSVRTLEECLLEGLSDLTVATNLIETRLLIGDVALFLALQKHIFSEGFWPSDKFYAAKVEEQNQRHQRYHGTSYNLEPDIKSSPGGLRDIHTLQWVARRHFGATSLDEMVGFGFLTPAERAELNECLHILWRIRFALHLVVSRYDNRLLFDRQLSVAQRLNYSGEGNDPVERMMKDYFRVTRRVSELNQMLLQLFDEAILALPADEKPRPVDDEFQLRGTLIDLRDDTLFIREPQAILRMFYMMVRNSAITGIYSTTLRHLRHARRHLSQPLCYIPEARTLFLSMLRHPGAVSRGLLPMHRHSVLWAYMPQWSHIVGQMQFDLFHAYTVDEHTIRVMLKLESFAKEETRQRHPLCVDLWPRLPHPELILIAALFHDIAKGRGGDHSVLGAQDVLTFAELHGLNSRETQLVAWLVRQHLLMSVTAQRRDIQDPEVIKQFAEEVQTETRLRFLVCLTVADICATNETLWNSWKQSLLRELYFATEKQLRRGMQNTPDMRERVRHHQLQALALLRMDNIDEAALHKIWTRCRANYFVRHSPNQLAWHARHLLQHDLRQPLVLLSPQATRGGTEIFIWSPDRPYLFAAVCAELDRRNLSVHDAQIFTTRDGMAMDTFIVLEPDGSPLAADRHDVIRTGLEQTITQRSWQPPQPRRQPAKLRHFTVETEVNFLPTHTDRKSFMELIALDQPGLLARVGQIFADLGISLHGARITTIGERVEDLFIIATADRRALNNVLQLEVQQRLTAALNPNDKG</sequence>
<keyword id="KW-0378">Hydrolase</keyword>
<keyword id="KW-0460">Magnesium</keyword>
<keyword id="KW-0511">Multifunctional enzyme</keyword>
<keyword id="KW-0548">Nucleotidyltransferase</keyword>
<keyword id="KW-1185">Reference proteome</keyword>
<keyword id="KW-0677">Repeat</keyword>
<keyword id="KW-0808">Transferase</keyword>
<accession>P23679</accession>
<proteinExistence type="inferred from homology"/>
<name>GLND_SALTY</name>
<organism>
    <name type="scientific">Salmonella typhimurium (strain LT2 / SGSC1412 / ATCC 700720)</name>
    <dbReference type="NCBI Taxonomy" id="99287"/>
    <lineage>
        <taxon>Bacteria</taxon>
        <taxon>Pseudomonadati</taxon>
        <taxon>Pseudomonadota</taxon>
        <taxon>Gammaproteobacteria</taxon>
        <taxon>Enterobacterales</taxon>
        <taxon>Enterobacteriaceae</taxon>
        <taxon>Salmonella</taxon>
    </lineage>
</organism>
<gene>
    <name evidence="1" type="primary">glnD</name>
    <name type="ordered locus">STM0214</name>
</gene>
<feature type="chain" id="PRO_0000192766" description="Bifunctional uridylyltransferase/uridylyl-removing enzyme">
    <location>
        <begin position="1"/>
        <end position="890"/>
    </location>
</feature>
<feature type="domain" description="HD" evidence="2">
    <location>
        <begin position="468"/>
        <end position="590"/>
    </location>
</feature>
<feature type="domain" description="ACT 1" evidence="1">
    <location>
        <begin position="709"/>
        <end position="784"/>
    </location>
</feature>
<feature type="domain" description="ACT 2" evidence="1">
    <location>
        <begin position="816"/>
        <end position="890"/>
    </location>
</feature>
<feature type="region of interest" description="Uridylyltransferase">
    <location>
        <begin position="1"/>
        <end position="349"/>
    </location>
</feature>
<feature type="region of interest" description="Disordered" evidence="3">
    <location>
        <begin position="1"/>
        <end position="21"/>
    </location>
</feature>
<feature type="region of interest" description="Uridylyl-removing">
    <location>
        <begin position="350"/>
        <end position="708"/>
    </location>
</feature>
<feature type="sequence conflict" description="In Ref. 2." evidence="4" ref="2">
    <original>H</original>
    <variation>D</variation>
    <location>
        <position position="101"/>
    </location>
</feature>